<organism>
    <name type="scientific">Streptococcus sanguinis (strain SK36)</name>
    <dbReference type="NCBI Taxonomy" id="388919"/>
    <lineage>
        <taxon>Bacteria</taxon>
        <taxon>Bacillati</taxon>
        <taxon>Bacillota</taxon>
        <taxon>Bacilli</taxon>
        <taxon>Lactobacillales</taxon>
        <taxon>Streptococcaceae</taxon>
        <taxon>Streptococcus</taxon>
    </lineage>
</organism>
<feature type="chain" id="PRO_1000066386" description="Carbamoyl phosphate synthase large chain">
    <location>
        <begin position="1"/>
        <end position="1059"/>
    </location>
</feature>
<feature type="domain" description="ATP-grasp 1" evidence="1">
    <location>
        <begin position="133"/>
        <end position="327"/>
    </location>
</feature>
<feature type="domain" description="ATP-grasp 2" evidence="1">
    <location>
        <begin position="671"/>
        <end position="861"/>
    </location>
</feature>
<feature type="domain" description="MGS-like" evidence="1">
    <location>
        <begin position="930"/>
        <end position="1059"/>
    </location>
</feature>
<feature type="region of interest" description="Carboxyphosphate synthetic domain" evidence="1">
    <location>
        <begin position="1"/>
        <end position="401"/>
    </location>
</feature>
<feature type="region of interest" description="Oligomerization domain" evidence="1">
    <location>
        <begin position="402"/>
        <end position="546"/>
    </location>
</feature>
<feature type="region of interest" description="Carbamoyl phosphate synthetic domain" evidence="1">
    <location>
        <begin position="547"/>
        <end position="929"/>
    </location>
</feature>
<feature type="region of interest" description="Allosteric domain" evidence="1">
    <location>
        <begin position="930"/>
        <end position="1059"/>
    </location>
</feature>
<feature type="binding site" evidence="1">
    <location>
        <position position="129"/>
    </location>
    <ligand>
        <name>ATP</name>
        <dbReference type="ChEBI" id="CHEBI:30616"/>
        <label>1</label>
    </ligand>
</feature>
<feature type="binding site" evidence="1">
    <location>
        <position position="169"/>
    </location>
    <ligand>
        <name>ATP</name>
        <dbReference type="ChEBI" id="CHEBI:30616"/>
        <label>1</label>
    </ligand>
</feature>
<feature type="binding site" evidence="1">
    <location>
        <position position="175"/>
    </location>
    <ligand>
        <name>ATP</name>
        <dbReference type="ChEBI" id="CHEBI:30616"/>
        <label>1</label>
    </ligand>
</feature>
<feature type="binding site" evidence="1">
    <location>
        <position position="176"/>
    </location>
    <ligand>
        <name>ATP</name>
        <dbReference type="ChEBI" id="CHEBI:30616"/>
        <label>1</label>
    </ligand>
</feature>
<feature type="binding site" evidence="1">
    <location>
        <position position="208"/>
    </location>
    <ligand>
        <name>ATP</name>
        <dbReference type="ChEBI" id="CHEBI:30616"/>
        <label>1</label>
    </ligand>
</feature>
<feature type="binding site" evidence="1">
    <location>
        <position position="210"/>
    </location>
    <ligand>
        <name>ATP</name>
        <dbReference type="ChEBI" id="CHEBI:30616"/>
        <label>1</label>
    </ligand>
</feature>
<feature type="binding site" evidence="1">
    <location>
        <position position="215"/>
    </location>
    <ligand>
        <name>ATP</name>
        <dbReference type="ChEBI" id="CHEBI:30616"/>
        <label>1</label>
    </ligand>
</feature>
<feature type="binding site" evidence="1">
    <location>
        <position position="241"/>
    </location>
    <ligand>
        <name>ATP</name>
        <dbReference type="ChEBI" id="CHEBI:30616"/>
        <label>1</label>
    </ligand>
</feature>
<feature type="binding site" evidence="1">
    <location>
        <position position="242"/>
    </location>
    <ligand>
        <name>ATP</name>
        <dbReference type="ChEBI" id="CHEBI:30616"/>
        <label>1</label>
    </ligand>
</feature>
<feature type="binding site" evidence="1">
    <location>
        <position position="243"/>
    </location>
    <ligand>
        <name>ATP</name>
        <dbReference type="ChEBI" id="CHEBI:30616"/>
        <label>1</label>
    </ligand>
</feature>
<feature type="binding site" evidence="1">
    <location>
        <position position="284"/>
    </location>
    <ligand>
        <name>ATP</name>
        <dbReference type="ChEBI" id="CHEBI:30616"/>
        <label>1</label>
    </ligand>
</feature>
<feature type="binding site" evidence="1">
    <location>
        <position position="284"/>
    </location>
    <ligand>
        <name>Mg(2+)</name>
        <dbReference type="ChEBI" id="CHEBI:18420"/>
        <label>1</label>
    </ligand>
</feature>
<feature type="binding site" evidence="1">
    <location>
        <position position="284"/>
    </location>
    <ligand>
        <name>Mn(2+)</name>
        <dbReference type="ChEBI" id="CHEBI:29035"/>
        <label>1</label>
    </ligand>
</feature>
<feature type="binding site" evidence="1">
    <location>
        <position position="298"/>
    </location>
    <ligand>
        <name>ATP</name>
        <dbReference type="ChEBI" id="CHEBI:30616"/>
        <label>1</label>
    </ligand>
</feature>
<feature type="binding site" evidence="1">
    <location>
        <position position="298"/>
    </location>
    <ligand>
        <name>Mg(2+)</name>
        <dbReference type="ChEBI" id="CHEBI:18420"/>
        <label>1</label>
    </ligand>
</feature>
<feature type="binding site" evidence="1">
    <location>
        <position position="298"/>
    </location>
    <ligand>
        <name>Mg(2+)</name>
        <dbReference type="ChEBI" id="CHEBI:18420"/>
        <label>2</label>
    </ligand>
</feature>
<feature type="binding site" evidence="1">
    <location>
        <position position="298"/>
    </location>
    <ligand>
        <name>Mn(2+)</name>
        <dbReference type="ChEBI" id="CHEBI:29035"/>
        <label>1</label>
    </ligand>
</feature>
<feature type="binding site" evidence="1">
    <location>
        <position position="298"/>
    </location>
    <ligand>
        <name>Mn(2+)</name>
        <dbReference type="ChEBI" id="CHEBI:29035"/>
        <label>2</label>
    </ligand>
</feature>
<feature type="binding site" evidence="1">
    <location>
        <position position="300"/>
    </location>
    <ligand>
        <name>Mg(2+)</name>
        <dbReference type="ChEBI" id="CHEBI:18420"/>
        <label>2</label>
    </ligand>
</feature>
<feature type="binding site" evidence="1">
    <location>
        <position position="300"/>
    </location>
    <ligand>
        <name>Mn(2+)</name>
        <dbReference type="ChEBI" id="CHEBI:29035"/>
        <label>2</label>
    </ligand>
</feature>
<feature type="binding site" evidence="1">
    <location>
        <position position="707"/>
    </location>
    <ligand>
        <name>ATP</name>
        <dbReference type="ChEBI" id="CHEBI:30616"/>
        <label>2</label>
    </ligand>
</feature>
<feature type="binding site" evidence="1">
    <location>
        <position position="746"/>
    </location>
    <ligand>
        <name>ATP</name>
        <dbReference type="ChEBI" id="CHEBI:30616"/>
        <label>2</label>
    </ligand>
</feature>
<feature type="binding site" evidence="1">
    <location>
        <position position="748"/>
    </location>
    <ligand>
        <name>ATP</name>
        <dbReference type="ChEBI" id="CHEBI:30616"/>
        <label>2</label>
    </ligand>
</feature>
<feature type="binding site" evidence="1">
    <location>
        <position position="752"/>
    </location>
    <ligand>
        <name>ATP</name>
        <dbReference type="ChEBI" id="CHEBI:30616"/>
        <label>2</label>
    </ligand>
</feature>
<feature type="binding site" evidence="1">
    <location>
        <position position="777"/>
    </location>
    <ligand>
        <name>ATP</name>
        <dbReference type="ChEBI" id="CHEBI:30616"/>
        <label>2</label>
    </ligand>
</feature>
<feature type="binding site" evidence="1">
    <location>
        <position position="778"/>
    </location>
    <ligand>
        <name>ATP</name>
        <dbReference type="ChEBI" id="CHEBI:30616"/>
        <label>2</label>
    </ligand>
</feature>
<feature type="binding site" evidence="1">
    <location>
        <position position="779"/>
    </location>
    <ligand>
        <name>ATP</name>
        <dbReference type="ChEBI" id="CHEBI:30616"/>
        <label>2</label>
    </ligand>
</feature>
<feature type="binding site" evidence="1">
    <location>
        <position position="780"/>
    </location>
    <ligand>
        <name>ATP</name>
        <dbReference type="ChEBI" id="CHEBI:30616"/>
        <label>2</label>
    </ligand>
</feature>
<feature type="binding site" evidence="1">
    <location>
        <position position="820"/>
    </location>
    <ligand>
        <name>ATP</name>
        <dbReference type="ChEBI" id="CHEBI:30616"/>
        <label>2</label>
    </ligand>
</feature>
<feature type="binding site" evidence="1">
    <location>
        <position position="820"/>
    </location>
    <ligand>
        <name>Mg(2+)</name>
        <dbReference type="ChEBI" id="CHEBI:18420"/>
        <label>3</label>
    </ligand>
</feature>
<feature type="binding site" evidence="1">
    <location>
        <position position="820"/>
    </location>
    <ligand>
        <name>Mn(2+)</name>
        <dbReference type="ChEBI" id="CHEBI:29035"/>
        <label>3</label>
    </ligand>
</feature>
<feature type="binding site" evidence="1">
    <location>
        <position position="832"/>
    </location>
    <ligand>
        <name>ATP</name>
        <dbReference type="ChEBI" id="CHEBI:30616"/>
        <label>2</label>
    </ligand>
</feature>
<feature type="binding site" evidence="1">
    <location>
        <position position="832"/>
    </location>
    <ligand>
        <name>Mg(2+)</name>
        <dbReference type="ChEBI" id="CHEBI:18420"/>
        <label>3</label>
    </ligand>
</feature>
<feature type="binding site" evidence="1">
    <location>
        <position position="832"/>
    </location>
    <ligand>
        <name>Mg(2+)</name>
        <dbReference type="ChEBI" id="CHEBI:18420"/>
        <label>4</label>
    </ligand>
</feature>
<feature type="binding site" evidence="1">
    <location>
        <position position="832"/>
    </location>
    <ligand>
        <name>Mn(2+)</name>
        <dbReference type="ChEBI" id="CHEBI:29035"/>
        <label>3</label>
    </ligand>
</feature>
<feature type="binding site" evidence="1">
    <location>
        <position position="832"/>
    </location>
    <ligand>
        <name>Mn(2+)</name>
        <dbReference type="ChEBI" id="CHEBI:29035"/>
        <label>4</label>
    </ligand>
</feature>
<feature type="binding site" evidence="1">
    <location>
        <position position="834"/>
    </location>
    <ligand>
        <name>Mg(2+)</name>
        <dbReference type="ChEBI" id="CHEBI:18420"/>
        <label>4</label>
    </ligand>
</feature>
<feature type="binding site" evidence="1">
    <location>
        <position position="834"/>
    </location>
    <ligand>
        <name>Mn(2+)</name>
        <dbReference type="ChEBI" id="CHEBI:29035"/>
        <label>4</label>
    </ligand>
</feature>
<name>CARB_STRSV</name>
<evidence type="ECO:0000255" key="1">
    <source>
        <dbReference type="HAMAP-Rule" id="MF_01210"/>
    </source>
</evidence>
<sequence>MPKRKDIQKIMVIGSGPIVIGQAAEFDYAGTQACLSLKEEGYSVVLVNSNPATIMTDKEIADRVYIEPITLEFVARILRKERPDALLPTLGGQTGLNMAMELSKSGLLEELGVELLGTKLSAIDQAEDRDLFKQLMEELGQPIPESEIVNTVDEALEFAAGIGYPVIVRPAFTLGGTGGGICSNEEELQEIAENGLKLSPVTQCLIERSIAGFKEIEYEVMRDGADNALVVCNMENFDPVGIHTGDSIVFAPSQTISDYEYQMLRDASLKIIRALKIEGGCNVQLALDPHSFKYYVIEVNPRVSRSSALASKATGYPIAKLAAKIAVGLTLDEIINPVTGSTYAMFEPALDYVVAKIPRFPFDKFEQGERRLGTQMKATGEVMAIGRNIEESLLKACRSLEVCVDHNELPALSQVSDDELMRKIVKAQDDRLFYISEAIRRGYSPDEIAELTKIDVFFLDKLLHIYEIEQELASHIGDSYVLKKAKQNGFADTKIASLWDMTAEQVRRIRQEQKIVPVYKMVDTCAAEFESATPYFYSTYGFENESVKSSKESVLVLGSGPIRIGQGVEFDYATVHSVKAIQAAGYEAIIMNSNPETVSTDFSVSDKLYFEPLTFEDVMNVIELEQPKGVIVQFGGQTAINLAEPLSKAGVKILGTQVADLDRAEDRDLFEQALKELDIPQPPGQTATNEEEAVEAARKIGFPVLVRPSYVLGGRAMEIVENEADLRSYMRTAVKASPDHPVLVDSYIVGDECEVDAISDGRQVLIPGIMEHIERAGVHSGDSMAAYPPQTLSQKVKDTIADYTKRLALGLNCIGMMNIQFVIKDEQVYVIEVNPRASRTVPFLSKVTDIPMAQVATRLILGETLAELGYEDGLYPESSMVHIKAPVFSFTKLAKVDSLLGPEMKSTGEVMGSDRTLEKALYKAFEASYLHLPNFGNIVFTIAGDSKEEALQLAQRFANIGYGIWATKGTASYFENHGLHVRLVEKIGSDDDKDIPAYIRKGKVQAIINTVGTKRTADKHGQIIRSSAIEHGVPLFTALDTADAMLKVLESRSFTTEAI</sequence>
<reference key="1">
    <citation type="journal article" date="2007" name="J. Bacteriol.">
        <title>Genome of the opportunistic pathogen Streptococcus sanguinis.</title>
        <authorList>
            <person name="Xu P."/>
            <person name="Alves J.M."/>
            <person name="Kitten T."/>
            <person name="Brown A."/>
            <person name="Chen Z."/>
            <person name="Ozaki L.S."/>
            <person name="Manque P."/>
            <person name="Ge X."/>
            <person name="Serrano M.G."/>
            <person name="Puiu D."/>
            <person name="Hendricks S."/>
            <person name="Wang Y."/>
            <person name="Chaplin M.D."/>
            <person name="Akan D."/>
            <person name="Paik S."/>
            <person name="Peterson D.L."/>
            <person name="Macrina F.L."/>
            <person name="Buck G.A."/>
        </authorList>
    </citation>
    <scope>NUCLEOTIDE SEQUENCE [LARGE SCALE GENOMIC DNA]</scope>
    <source>
        <strain>SK36</strain>
    </source>
</reference>
<dbReference type="EC" id="6.3.4.16" evidence="1"/>
<dbReference type="EC" id="6.3.5.5" evidence="1"/>
<dbReference type="EMBL" id="CP000387">
    <property type="protein sequence ID" value="ABN44740.1"/>
    <property type="molecule type" value="Genomic_DNA"/>
</dbReference>
<dbReference type="RefSeq" id="WP_011837069.1">
    <property type="nucleotide sequence ID" value="NC_009009.1"/>
</dbReference>
<dbReference type="RefSeq" id="YP_001035290.1">
    <property type="nucleotide sequence ID" value="NC_009009.1"/>
</dbReference>
<dbReference type="SMR" id="A3CNI5"/>
<dbReference type="STRING" id="388919.SSA_1341"/>
<dbReference type="KEGG" id="ssa:SSA_1341"/>
<dbReference type="PATRIC" id="fig|388919.9.peg.1275"/>
<dbReference type="eggNOG" id="COG0458">
    <property type="taxonomic scope" value="Bacteria"/>
</dbReference>
<dbReference type="HOGENOM" id="CLU_000513_1_2_9"/>
<dbReference type="OrthoDB" id="9804197at2"/>
<dbReference type="UniPathway" id="UPA00068">
    <property type="reaction ID" value="UER00171"/>
</dbReference>
<dbReference type="UniPathway" id="UPA00070">
    <property type="reaction ID" value="UER00115"/>
</dbReference>
<dbReference type="Proteomes" id="UP000002148">
    <property type="component" value="Chromosome"/>
</dbReference>
<dbReference type="GO" id="GO:0005737">
    <property type="term" value="C:cytoplasm"/>
    <property type="evidence" value="ECO:0007669"/>
    <property type="project" value="TreeGrafter"/>
</dbReference>
<dbReference type="GO" id="GO:0005524">
    <property type="term" value="F:ATP binding"/>
    <property type="evidence" value="ECO:0007669"/>
    <property type="project" value="UniProtKB-UniRule"/>
</dbReference>
<dbReference type="GO" id="GO:0004087">
    <property type="term" value="F:carbamoyl-phosphate synthase (ammonia) activity"/>
    <property type="evidence" value="ECO:0007669"/>
    <property type="project" value="RHEA"/>
</dbReference>
<dbReference type="GO" id="GO:0004088">
    <property type="term" value="F:carbamoyl-phosphate synthase (glutamine-hydrolyzing) activity"/>
    <property type="evidence" value="ECO:0007669"/>
    <property type="project" value="UniProtKB-UniRule"/>
</dbReference>
<dbReference type="GO" id="GO:0046872">
    <property type="term" value="F:metal ion binding"/>
    <property type="evidence" value="ECO:0007669"/>
    <property type="project" value="UniProtKB-KW"/>
</dbReference>
<dbReference type="GO" id="GO:0044205">
    <property type="term" value="P:'de novo' UMP biosynthetic process"/>
    <property type="evidence" value="ECO:0007669"/>
    <property type="project" value="UniProtKB-UniRule"/>
</dbReference>
<dbReference type="GO" id="GO:0006541">
    <property type="term" value="P:glutamine metabolic process"/>
    <property type="evidence" value="ECO:0007669"/>
    <property type="project" value="TreeGrafter"/>
</dbReference>
<dbReference type="GO" id="GO:0006526">
    <property type="term" value="P:L-arginine biosynthetic process"/>
    <property type="evidence" value="ECO:0007669"/>
    <property type="project" value="UniProtKB-UniRule"/>
</dbReference>
<dbReference type="CDD" id="cd01424">
    <property type="entry name" value="MGS_CPS_II"/>
    <property type="match status" value="1"/>
</dbReference>
<dbReference type="FunFam" id="1.10.1030.10:FF:000002">
    <property type="entry name" value="Carbamoyl-phosphate synthase large chain"/>
    <property type="match status" value="1"/>
</dbReference>
<dbReference type="FunFam" id="3.30.1490.20:FF:000001">
    <property type="entry name" value="Carbamoyl-phosphate synthase large chain"/>
    <property type="match status" value="1"/>
</dbReference>
<dbReference type="FunFam" id="3.30.470.20:FF:000001">
    <property type="entry name" value="Carbamoyl-phosphate synthase large chain"/>
    <property type="match status" value="1"/>
</dbReference>
<dbReference type="FunFam" id="3.30.470.20:FF:000026">
    <property type="entry name" value="Carbamoyl-phosphate synthase large chain"/>
    <property type="match status" value="1"/>
</dbReference>
<dbReference type="FunFam" id="3.40.50.20:FF:000001">
    <property type="entry name" value="Carbamoyl-phosphate synthase large chain"/>
    <property type="match status" value="2"/>
</dbReference>
<dbReference type="Gene3D" id="3.40.50.20">
    <property type="match status" value="2"/>
</dbReference>
<dbReference type="Gene3D" id="3.30.1490.20">
    <property type="entry name" value="ATP-grasp fold, A domain"/>
    <property type="match status" value="1"/>
</dbReference>
<dbReference type="Gene3D" id="3.30.470.20">
    <property type="entry name" value="ATP-grasp fold, B domain"/>
    <property type="match status" value="2"/>
</dbReference>
<dbReference type="Gene3D" id="1.10.1030.10">
    <property type="entry name" value="Carbamoyl-phosphate synthetase, large subunit oligomerisation domain"/>
    <property type="match status" value="1"/>
</dbReference>
<dbReference type="Gene3D" id="3.40.50.1380">
    <property type="entry name" value="Methylglyoxal synthase-like domain"/>
    <property type="match status" value="1"/>
</dbReference>
<dbReference type="HAMAP" id="MF_01210_A">
    <property type="entry name" value="CPSase_L_chain_A"/>
    <property type="match status" value="1"/>
</dbReference>
<dbReference type="HAMAP" id="MF_01210_B">
    <property type="entry name" value="CPSase_L_chain_B"/>
    <property type="match status" value="1"/>
</dbReference>
<dbReference type="InterPro" id="IPR011761">
    <property type="entry name" value="ATP-grasp"/>
</dbReference>
<dbReference type="InterPro" id="IPR013815">
    <property type="entry name" value="ATP_grasp_subdomain_1"/>
</dbReference>
<dbReference type="InterPro" id="IPR006275">
    <property type="entry name" value="CarbamoylP_synth_lsu"/>
</dbReference>
<dbReference type="InterPro" id="IPR005480">
    <property type="entry name" value="CarbamoylP_synth_lsu_oligo"/>
</dbReference>
<dbReference type="InterPro" id="IPR036897">
    <property type="entry name" value="CarbamoylP_synth_lsu_oligo_sf"/>
</dbReference>
<dbReference type="InterPro" id="IPR005479">
    <property type="entry name" value="CbamoylP_synth_lsu-like_ATP-bd"/>
</dbReference>
<dbReference type="InterPro" id="IPR005483">
    <property type="entry name" value="CbamoylP_synth_lsu_CPSase_dom"/>
</dbReference>
<dbReference type="InterPro" id="IPR011607">
    <property type="entry name" value="MGS-like_dom"/>
</dbReference>
<dbReference type="InterPro" id="IPR036914">
    <property type="entry name" value="MGS-like_dom_sf"/>
</dbReference>
<dbReference type="InterPro" id="IPR033937">
    <property type="entry name" value="MGS_CPS_CarB"/>
</dbReference>
<dbReference type="InterPro" id="IPR016185">
    <property type="entry name" value="PreATP-grasp_dom_sf"/>
</dbReference>
<dbReference type="NCBIfam" id="TIGR01369">
    <property type="entry name" value="CPSaseII_lrg"/>
    <property type="match status" value="1"/>
</dbReference>
<dbReference type="NCBIfam" id="NF003671">
    <property type="entry name" value="PRK05294.1"/>
    <property type="match status" value="1"/>
</dbReference>
<dbReference type="NCBIfam" id="NF009455">
    <property type="entry name" value="PRK12815.1"/>
    <property type="match status" value="1"/>
</dbReference>
<dbReference type="PANTHER" id="PTHR11405:SF53">
    <property type="entry name" value="CARBAMOYL-PHOSPHATE SYNTHASE [AMMONIA], MITOCHONDRIAL"/>
    <property type="match status" value="1"/>
</dbReference>
<dbReference type="PANTHER" id="PTHR11405">
    <property type="entry name" value="CARBAMOYLTRANSFERASE FAMILY MEMBER"/>
    <property type="match status" value="1"/>
</dbReference>
<dbReference type="Pfam" id="PF02786">
    <property type="entry name" value="CPSase_L_D2"/>
    <property type="match status" value="2"/>
</dbReference>
<dbReference type="Pfam" id="PF02787">
    <property type="entry name" value="CPSase_L_D3"/>
    <property type="match status" value="1"/>
</dbReference>
<dbReference type="Pfam" id="PF02142">
    <property type="entry name" value="MGS"/>
    <property type="match status" value="1"/>
</dbReference>
<dbReference type="PRINTS" id="PR00098">
    <property type="entry name" value="CPSASE"/>
</dbReference>
<dbReference type="SMART" id="SM01096">
    <property type="entry name" value="CPSase_L_D3"/>
    <property type="match status" value="1"/>
</dbReference>
<dbReference type="SMART" id="SM01209">
    <property type="entry name" value="GARS_A"/>
    <property type="match status" value="1"/>
</dbReference>
<dbReference type="SMART" id="SM00851">
    <property type="entry name" value="MGS"/>
    <property type="match status" value="1"/>
</dbReference>
<dbReference type="SUPFAM" id="SSF48108">
    <property type="entry name" value="Carbamoyl phosphate synthetase, large subunit connection domain"/>
    <property type="match status" value="1"/>
</dbReference>
<dbReference type="SUPFAM" id="SSF56059">
    <property type="entry name" value="Glutathione synthetase ATP-binding domain-like"/>
    <property type="match status" value="2"/>
</dbReference>
<dbReference type="SUPFAM" id="SSF52335">
    <property type="entry name" value="Methylglyoxal synthase-like"/>
    <property type="match status" value="1"/>
</dbReference>
<dbReference type="SUPFAM" id="SSF52440">
    <property type="entry name" value="PreATP-grasp domain"/>
    <property type="match status" value="2"/>
</dbReference>
<dbReference type="PROSITE" id="PS50975">
    <property type="entry name" value="ATP_GRASP"/>
    <property type="match status" value="2"/>
</dbReference>
<dbReference type="PROSITE" id="PS00866">
    <property type="entry name" value="CPSASE_1"/>
    <property type="match status" value="2"/>
</dbReference>
<dbReference type="PROSITE" id="PS00867">
    <property type="entry name" value="CPSASE_2"/>
    <property type="match status" value="2"/>
</dbReference>
<dbReference type="PROSITE" id="PS51855">
    <property type="entry name" value="MGS"/>
    <property type="match status" value="1"/>
</dbReference>
<gene>
    <name evidence="1" type="primary">carB</name>
    <name type="ordered locus">SSA_1341</name>
</gene>
<proteinExistence type="inferred from homology"/>
<protein>
    <recommendedName>
        <fullName evidence="1">Carbamoyl phosphate synthase large chain</fullName>
        <ecNumber evidence="1">6.3.4.16</ecNumber>
        <ecNumber evidence="1">6.3.5.5</ecNumber>
    </recommendedName>
    <alternativeName>
        <fullName evidence="1">Carbamoyl phosphate synthetase ammonia chain</fullName>
    </alternativeName>
</protein>
<keyword id="KW-0028">Amino-acid biosynthesis</keyword>
<keyword id="KW-0055">Arginine biosynthesis</keyword>
<keyword id="KW-0067">ATP-binding</keyword>
<keyword id="KW-0436">Ligase</keyword>
<keyword id="KW-0460">Magnesium</keyword>
<keyword id="KW-0464">Manganese</keyword>
<keyword id="KW-0479">Metal-binding</keyword>
<keyword id="KW-0547">Nucleotide-binding</keyword>
<keyword id="KW-0665">Pyrimidine biosynthesis</keyword>
<keyword id="KW-1185">Reference proteome</keyword>
<keyword id="KW-0677">Repeat</keyword>
<accession>A3CNI5</accession>
<comment type="function">
    <text evidence="1">Large subunit of the glutamine-dependent carbamoyl phosphate synthetase (CPSase). CPSase catalyzes the formation of carbamoyl phosphate from the ammonia moiety of glutamine, carbonate, and phosphate donated by ATP, constituting the first step of 2 biosynthetic pathways, one leading to arginine and/or urea and the other to pyrimidine nucleotides. The large subunit (synthetase) binds the substrates ammonia (free or transferred from glutamine from the small subunit), hydrogencarbonate and ATP and carries out an ATP-coupled ligase reaction, activating hydrogencarbonate by forming carboxy phosphate which reacts with ammonia to form carbamoyl phosphate.</text>
</comment>
<comment type="catalytic activity">
    <reaction evidence="1">
        <text>hydrogencarbonate + L-glutamine + 2 ATP + H2O = carbamoyl phosphate + L-glutamate + 2 ADP + phosphate + 2 H(+)</text>
        <dbReference type="Rhea" id="RHEA:18633"/>
        <dbReference type="ChEBI" id="CHEBI:15377"/>
        <dbReference type="ChEBI" id="CHEBI:15378"/>
        <dbReference type="ChEBI" id="CHEBI:17544"/>
        <dbReference type="ChEBI" id="CHEBI:29985"/>
        <dbReference type="ChEBI" id="CHEBI:30616"/>
        <dbReference type="ChEBI" id="CHEBI:43474"/>
        <dbReference type="ChEBI" id="CHEBI:58228"/>
        <dbReference type="ChEBI" id="CHEBI:58359"/>
        <dbReference type="ChEBI" id="CHEBI:456216"/>
        <dbReference type="EC" id="6.3.5.5"/>
    </reaction>
</comment>
<comment type="catalytic activity">
    <molecule>Carbamoyl phosphate synthase large chain</molecule>
    <reaction evidence="1">
        <text>hydrogencarbonate + NH4(+) + 2 ATP = carbamoyl phosphate + 2 ADP + phosphate + 2 H(+)</text>
        <dbReference type="Rhea" id="RHEA:18029"/>
        <dbReference type="ChEBI" id="CHEBI:15378"/>
        <dbReference type="ChEBI" id="CHEBI:17544"/>
        <dbReference type="ChEBI" id="CHEBI:28938"/>
        <dbReference type="ChEBI" id="CHEBI:30616"/>
        <dbReference type="ChEBI" id="CHEBI:43474"/>
        <dbReference type="ChEBI" id="CHEBI:58228"/>
        <dbReference type="ChEBI" id="CHEBI:456216"/>
        <dbReference type="EC" id="6.3.4.16"/>
    </reaction>
</comment>
<comment type="cofactor">
    <cofactor evidence="1">
        <name>Mg(2+)</name>
        <dbReference type="ChEBI" id="CHEBI:18420"/>
    </cofactor>
    <cofactor evidence="1">
        <name>Mn(2+)</name>
        <dbReference type="ChEBI" id="CHEBI:29035"/>
    </cofactor>
    <text evidence="1">Binds 4 Mg(2+) or Mn(2+) ions per subunit.</text>
</comment>
<comment type="pathway">
    <text evidence="1">Amino-acid biosynthesis; L-arginine biosynthesis; carbamoyl phosphate from bicarbonate: step 1/1.</text>
</comment>
<comment type="pathway">
    <text evidence="1">Pyrimidine metabolism; UMP biosynthesis via de novo pathway; (S)-dihydroorotate from bicarbonate: step 1/3.</text>
</comment>
<comment type="subunit">
    <text evidence="1">Composed of two chains; the small (or glutamine) chain promotes the hydrolysis of glutamine to ammonia, which is used by the large (or ammonia) chain to synthesize carbamoyl phosphate. Tetramer of heterodimers (alpha,beta)4.</text>
</comment>
<comment type="domain">
    <text evidence="1">The large subunit is composed of 2 ATP-grasp domains that are involved in binding the 2 ATP molecules needed for carbamoyl phosphate synthesis. The N-terminal ATP-grasp domain (referred to as the carboxyphosphate synthetic component) catalyzes the ATP-dependent phosphorylation of hydrogencarbonate to carboxyphosphate and the subsequent nucleophilic attack by ammonia to form a carbamate intermediate. The C-terminal ATP-grasp domain (referred to as the carbamoyl phosphate synthetic component) then catalyzes the phosphorylation of carbamate with the second ATP to form the end product carbamoyl phosphate. The reactive and unstable enzyme intermediates are sequentially channeled from one active site to the next through the interior of the protein over a distance of at least 96 A.</text>
</comment>
<comment type="similarity">
    <text evidence="1">Belongs to the CarB family.</text>
</comment>